<dbReference type="EMBL" id="CP001103">
    <property type="protein sequence ID" value="AEA97669.1"/>
    <property type="molecule type" value="Genomic_DNA"/>
</dbReference>
<dbReference type="RefSeq" id="WP_012518002.1">
    <property type="nucleotide sequence ID" value="NC_011138.3"/>
</dbReference>
<dbReference type="SMR" id="B4RSV6"/>
<dbReference type="GeneID" id="56341949"/>
<dbReference type="KEGG" id="amc:MADE_1007645"/>
<dbReference type="HOGENOM" id="CLU_036856_0_1_6"/>
<dbReference type="Proteomes" id="UP000001870">
    <property type="component" value="Chromosome"/>
</dbReference>
<dbReference type="GO" id="GO:0005737">
    <property type="term" value="C:cytoplasm"/>
    <property type="evidence" value="ECO:0007669"/>
    <property type="project" value="UniProtKB-SubCell"/>
</dbReference>
<dbReference type="GO" id="GO:0016149">
    <property type="term" value="F:translation release factor activity, codon specific"/>
    <property type="evidence" value="ECO:0007669"/>
    <property type="project" value="UniProtKB-UniRule"/>
</dbReference>
<dbReference type="FunFam" id="3.30.160.20:FF:000004">
    <property type="entry name" value="Peptide chain release factor 1"/>
    <property type="match status" value="1"/>
</dbReference>
<dbReference type="FunFam" id="3.30.70.1660:FF:000002">
    <property type="entry name" value="Peptide chain release factor 1"/>
    <property type="match status" value="1"/>
</dbReference>
<dbReference type="FunFam" id="3.30.70.1660:FF:000004">
    <property type="entry name" value="Peptide chain release factor 1"/>
    <property type="match status" value="1"/>
</dbReference>
<dbReference type="Gene3D" id="3.30.160.20">
    <property type="match status" value="1"/>
</dbReference>
<dbReference type="Gene3D" id="3.30.70.1660">
    <property type="match status" value="1"/>
</dbReference>
<dbReference type="Gene3D" id="6.10.140.1950">
    <property type="match status" value="1"/>
</dbReference>
<dbReference type="HAMAP" id="MF_00093">
    <property type="entry name" value="Rel_fac_1"/>
    <property type="match status" value="1"/>
</dbReference>
<dbReference type="InterPro" id="IPR005139">
    <property type="entry name" value="PCRF"/>
</dbReference>
<dbReference type="InterPro" id="IPR000352">
    <property type="entry name" value="Pep_chain_release_fac_I"/>
</dbReference>
<dbReference type="InterPro" id="IPR045853">
    <property type="entry name" value="Pep_chain_release_fac_I_sf"/>
</dbReference>
<dbReference type="InterPro" id="IPR050057">
    <property type="entry name" value="Prokaryotic/Mito_RF"/>
</dbReference>
<dbReference type="InterPro" id="IPR004373">
    <property type="entry name" value="RF-1"/>
</dbReference>
<dbReference type="NCBIfam" id="TIGR00019">
    <property type="entry name" value="prfA"/>
    <property type="match status" value="1"/>
</dbReference>
<dbReference type="NCBIfam" id="NF001859">
    <property type="entry name" value="PRK00591.1"/>
    <property type="match status" value="1"/>
</dbReference>
<dbReference type="PANTHER" id="PTHR43804">
    <property type="entry name" value="LD18447P"/>
    <property type="match status" value="1"/>
</dbReference>
<dbReference type="PANTHER" id="PTHR43804:SF7">
    <property type="entry name" value="LD18447P"/>
    <property type="match status" value="1"/>
</dbReference>
<dbReference type="Pfam" id="PF03462">
    <property type="entry name" value="PCRF"/>
    <property type="match status" value="1"/>
</dbReference>
<dbReference type="Pfam" id="PF00472">
    <property type="entry name" value="RF-1"/>
    <property type="match status" value="1"/>
</dbReference>
<dbReference type="SMART" id="SM00937">
    <property type="entry name" value="PCRF"/>
    <property type="match status" value="1"/>
</dbReference>
<dbReference type="SUPFAM" id="SSF75620">
    <property type="entry name" value="Release factor"/>
    <property type="match status" value="1"/>
</dbReference>
<dbReference type="PROSITE" id="PS00745">
    <property type="entry name" value="RF_PROK_I"/>
    <property type="match status" value="1"/>
</dbReference>
<keyword id="KW-0963">Cytoplasm</keyword>
<keyword id="KW-0488">Methylation</keyword>
<keyword id="KW-0648">Protein biosynthesis</keyword>
<name>RF1_ALTMD</name>
<evidence type="ECO:0000255" key="1">
    <source>
        <dbReference type="HAMAP-Rule" id="MF_00093"/>
    </source>
</evidence>
<evidence type="ECO:0000256" key="2">
    <source>
        <dbReference type="SAM" id="MobiDB-lite"/>
    </source>
</evidence>
<comment type="function">
    <text evidence="1">Peptide chain release factor 1 directs the termination of translation in response to the peptide chain termination codons UAG and UAA.</text>
</comment>
<comment type="subcellular location">
    <subcellularLocation>
        <location evidence="1">Cytoplasm</location>
    </subcellularLocation>
</comment>
<comment type="PTM">
    <text evidence="1">Methylated by PrmC. Methylation increases the termination efficiency of RF1.</text>
</comment>
<comment type="similarity">
    <text evidence="1">Belongs to the prokaryotic/mitochondrial release factor family.</text>
</comment>
<organism>
    <name type="scientific">Alteromonas mediterranea (strain DSM 17117 / CIP 110805 / LMG 28347 / Deep ecotype)</name>
    <dbReference type="NCBI Taxonomy" id="1774373"/>
    <lineage>
        <taxon>Bacteria</taxon>
        <taxon>Pseudomonadati</taxon>
        <taxon>Pseudomonadota</taxon>
        <taxon>Gammaproteobacteria</taxon>
        <taxon>Alteromonadales</taxon>
        <taxon>Alteromonadaceae</taxon>
        <taxon>Alteromonas/Salinimonas group</taxon>
        <taxon>Alteromonas</taxon>
    </lineage>
</organism>
<accession>B4RSV6</accession>
<accession>F2G7L2</accession>
<reference key="1">
    <citation type="journal article" date="2008" name="ISME J.">
        <title>Comparative genomics of two ecotypes of the marine planktonic copiotroph Alteromonas macleodii suggests alternative lifestyles associated with different kinds of particulate organic matter.</title>
        <authorList>
            <person name="Ivars-Martinez E."/>
            <person name="Martin-Cuadrado A.-B."/>
            <person name="D'Auria G."/>
            <person name="Mira A."/>
            <person name="Ferriera S."/>
            <person name="Johnson J."/>
            <person name="Friedman R."/>
            <person name="Rodriguez-Valera F."/>
        </authorList>
    </citation>
    <scope>NUCLEOTIDE SEQUENCE [LARGE SCALE GENOMIC DNA]</scope>
    <source>
        <strain>DSM 17117 / CIP 110805 / LMG 28347 / Deep ecotype</strain>
    </source>
</reference>
<protein>
    <recommendedName>
        <fullName evidence="1">Peptide chain release factor 1</fullName>
        <shortName evidence="1">RF-1</shortName>
    </recommendedName>
</protein>
<proteinExistence type="inferred from homology"/>
<feature type="chain" id="PRO_1000093419" description="Peptide chain release factor 1">
    <location>
        <begin position="1"/>
        <end position="361"/>
    </location>
</feature>
<feature type="region of interest" description="Disordered" evidence="2">
    <location>
        <begin position="287"/>
        <end position="306"/>
    </location>
</feature>
<feature type="modified residue" description="N5-methylglutamine" evidence="1">
    <location>
        <position position="237"/>
    </location>
</feature>
<sequence>MKESVVRKLEHLVERFEEVQALLGDPEVIGDQDKFRNLSKEFSQLEDVVAGFNAYQQAQENLASAQEMLNEDDAEMREMAQEEMKEAKGEIERLETELQVLLLPKDPNDDNNCFLEIRAGAGGDEAAIFAGDLFRMYSRYAESRGWRVELVNANESEHGGYKEVVANVSGDGVYGVLKFESGGHRVQRVPETESQGRIHTSACTVAVLPEIPESEAIEINPAELRIDTFRASGAGGQHVNKTDSAIRITHLPTGLVVECQDERSQHKNRAKAMSVLQARLNQIEEEKRAAEEASTRKSLVGSGDRSERIRTYNFPQGRVTDHRINLTIYRLDEVVEGDLKQLVDPILQEHQADLLASLSDE</sequence>
<gene>
    <name evidence="1" type="primary">prfA</name>
    <name type="ordered locus">MADE_1007645</name>
</gene>